<name>P2C42_ARATH</name>
<dbReference type="EC" id="3.1.3.16" evidence="2"/>
<dbReference type="EMBL" id="AB026636">
    <property type="protein sequence ID" value="BAA94987.1"/>
    <property type="status" value="ALT_INIT"/>
    <property type="molecule type" value="Genomic_DNA"/>
</dbReference>
<dbReference type="EMBL" id="CP002686">
    <property type="protein sequence ID" value="AEE75902.1"/>
    <property type="molecule type" value="Genomic_DNA"/>
</dbReference>
<dbReference type="EMBL" id="CP002686">
    <property type="protein sequence ID" value="AEE75903.1"/>
    <property type="molecule type" value="Genomic_DNA"/>
</dbReference>
<dbReference type="EMBL" id="BT026468">
    <property type="protein sequence ID" value="ABH04575.1"/>
    <property type="molecule type" value="mRNA"/>
</dbReference>
<dbReference type="EMBL" id="AY085196">
    <property type="protein sequence ID" value="AAM61747.1"/>
    <property type="molecule type" value="mRNA"/>
</dbReference>
<dbReference type="RefSeq" id="NP_001030714.1">
    <molecule id="Q0V7V2-2"/>
    <property type="nucleotide sequence ID" value="NM_001035637.1"/>
</dbReference>
<dbReference type="RefSeq" id="NP_566566.1">
    <molecule id="Q0V7V2-1"/>
    <property type="nucleotide sequence ID" value="NM_112585.3"/>
</dbReference>
<dbReference type="SMR" id="Q0V7V2"/>
<dbReference type="BioGRID" id="6299">
    <property type="interactions" value="3"/>
</dbReference>
<dbReference type="FunCoup" id="Q0V7V2">
    <property type="interactions" value="3829"/>
</dbReference>
<dbReference type="IntAct" id="Q0V7V2">
    <property type="interactions" value="3"/>
</dbReference>
<dbReference type="STRING" id="3702.Q0V7V2"/>
<dbReference type="PaxDb" id="3702-AT3G17090.1"/>
<dbReference type="ProteomicsDB" id="248878">
    <molecule id="Q0V7V2-1"/>
</dbReference>
<dbReference type="EnsemblPlants" id="AT3G17090.1">
    <molecule id="Q0V7V2-1"/>
    <property type="protein sequence ID" value="AT3G17090.1"/>
    <property type="gene ID" value="AT3G17090"/>
</dbReference>
<dbReference type="EnsemblPlants" id="AT3G17090.2">
    <molecule id="Q0V7V2-2"/>
    <property type="protein sequence ID" value="AT3G17090.2"/>
    <property type="gene ID" value="AT3G17090"/>
</dbReference>
<dbReference type="GeneID" id="820966"/>
<dbReference type="Gramene" id="AT3G17090.1">
    <molecule id="Q0V7V2-1"/>
    <property type="protein sequence ID" value="AT3G17090.1"/>
    <property type="gene ID" value="AT3G17090"/>
</dbReference>
<dbReference type="Gramene" id="AT3G17090.2">
    <molecule id="Q0V7V2-2"/>
    <property type="protein sequence ID" value="AT3G17090.2"/>
    <property type="gene ID" value="AT3G17090"/>
</dbReference>
<dbReference type="KEGG" id="ath:AT3G17090"/>
<dbReference type="Araport" id="AT3G17090"/>
<dbReference type="TAIR" id="AT3G17090">
    <property type="gene designation" value="PP2C.D2"/>
</dbReference>
<dbReference type="eggNOG" id="KOG0700">
    <property type="taxonomic scope" value="Eukaryota"/>
</dbReference>
<dbReference type="HOGENOM" id="CLU_013173_2_0_1"/>
<dbReference type="InParanoid" id="Q0V7V2"/>
<dbReference type="OMA" id="SCACLAY"/>
<dbReference type="OrthoDB" id="420076at2759"/>
<dbReference type="PhylomeDB" id="Q0V7V2"/>
<dbReference type="PRO" id="PR:Q0V7V2"/>
<dbReference type="Proteomes" id="UP000006548">
    <property type="component" value="Chromosome 3"/>
</dbReference>
<dbReference type="ExpressionAtlas" id="Q0V7V2">
    <property type="expression patterns" value="baseline and differential"/>
</dbReference>
<dbReference type="GO" id="GO:0046872">
    <property type="term" value="F:metal ion binding"/>
    <property type="evidence" value="ECO:0007669"/>
    <property type="project" value="UniProtKB-KW"/>
</dbReference>
<dbReference type="GO" id="GO:0004722">
    <property type="term" value="F:protein serine/threonine phosphatase activity"/>
    <property type="evidence" value="ECO:0007669"/>
    <property type="project" value="UniProtKB-EC"/>
</dbReference>
<dbReference type="CDD" id="cd00143">
    <property type="entry name" value="PP2Cc"/>
    <property type="match status" value="1"/>
</dbReference>
<dbReference type="FunFam" id="3.60.40.10:FF:000020">
    <property type="entry name" value="Probable protein phosphatase 2C 42"/>
    <property type="match status" value="1"/>
</dbReference>
<dbReference type="Gene3D" id="3.60.40.10">
    <property type="entry name" value="PPM-type phosphatase domain"/>
    <property type="match status" value="1"/>
</dbReference>
<dbReference type="InterPro" id="IPR015655">
    <property type="entry name" value="PP2C"/>
</dbReference>
<dbReference type="InterPro" id="IPR000222">
    <property type="entry name" value="PP2C_BS"/>
</dbReference>
<dbReference type="InterPro" id="IPR036457">
    <property type="entry name" value="PPM-type-like_dom_sf"/>
</dbReference>
<dbReference type="InterPro" id="IPR001932">
    <property type="entry name" value="PPM-type_phosphatase-like_dom"/>
</dbReference>
<dbReference type="PANTHER" id="PTHR47992">
    <property type="entry name" value="PROTEIN PHOSPHATASE"/>
    <property type="match status" value="1"/>
</dbReference>
<dbReference type="Pfam" id="PF00481">
    <property type="entry name" value="PP2C"/>
    <property type="match status" value="1"/>
</dbReference>
<dbReference type="SMART" id="SM00332">
    <property type="entry name" value="PP2Cc"/>
    <property type="match status" value="1"/>
</dbReference>
<dbReference type="SUPFAM" id="SSF81606">
    <property type="entry name" value="PP2C-like"/>
    <property type="match status" value="1"/>
</dbReference>
<dbReference type="PROSITE" id="PS01032">
    <property type="entry name" value="PPM_1"/>
    <property type="match status" value="1"/>
</dbReference>
<dbReference type="PROSITE" id="PS51746">
    <property type="entry name" value="PPM_2"/>
    <property type="match status" value="1"/>
</dbReference>
<comment type="function">
    <text evidence="4">Dephosphorylates and represses plasma membrane H(+)-ATPases (PM H(+)-ATPases, e.g. AHA1 and AHA2), thus influencing negatively plant growth and fitness (PubMed:24858935). Promotes the apical hook maintenance of etiolated seedlings (PubMed:24858935).</text>
</comment>
<comment type="catalytic activity">
    <reaction evidence="2">
        <text>O-phospho-L-seryl-[protein] + H2O = L-seryl-[protein] + phosphate</text>
        <dbReference type="Rhea" id="RHEA:20629"/>
        <dbReference type="Rhea" id="RHEA-COMP:9863"/>
        <dbReference type="Rhea" id="RHEA-COMP:11604"/>
        <dbReference type="ChEBI" id="CHEBI:15377"/>
        <dbReference type="ChEBI" id="CHEBI:29999"/>
        <dbReference type="ChEBI" id="CHEBI:43474"/>
        <dbReference type="ChEBI" id="CHEBI:83421"/>
        <dbReference type="EC" id="3.1.3.16"/>
    </reaction>
</comment>
<comment type="catalytic activity">
    <reaction evidence="2">
        <text>O-phospho-L-threonyl-[protein] + H2O = L-threonyl-[protein] + phosphate</text>
        <dbReference type="Rhea" id="RHEA:47004"/>
        <dbReference type="Rhea" id="RHEA-COMP:11060"/>
        <dbReference type="Rhea" id="RHEA-COMP:11605"/>
        <dbReference type="ChEBI" id="CHEBI:15377"/>
        <dbReference type="ChEBI" id="CHEBI:30013"/>
        <dbReference type="ChEBI" id="CHEBI:43474"/>
        <dbReference type="ChEBI" id="CHEBI:61977"/>
        <dbReference type="EC" id="3.1.3.16"/>
    </reaction>
</comment>
<comment type="cofactor">
    <cofactor evidence="1">
        <name>Mg(2+)</name>
        <dbReference type="ChEBI" id="CHEBI:18420"/>
    </cofactor>
    <cofactor evidence="1">
        <name>Mn(2+)</name>
        <dbReference type="ChEBI" id="CHEBI:29035"/>
    </cofactor>
    <text evidence="1">Binds 2 magnesium or manganese ions per subunit.</text>
</comment>
<comment type="interaction">
    <interactant intactId="EBI-25517797">
        <id>Q0V7V2</id>
    </interactant>
    <interactant intactId="EBI-25520581">
        <id>Q41220</id>
        <label>SAUR15</label>
    </interactant>
    <organismsDiffer>false</organismsDiffer>
    <experiments>3</experiments>
</comment>
<comment type="interaction">
    <interactant intactId="EBI-25517797">
        <id>Q0V7V2</id>
    </interactant>
    <interactant intactId="EBI-25522374">
        <id>Q9FJG0</id>
        <label>SAUR20</label>
    </interactant>
    <organismsDiffer>false</organismsDiffer>
    <experiments>3</experiments>
</comment>
<comment type="interaction">
    <interactant intactId="EBI-25517797">
        <id>Q0V7V2</id>
    </interactant>
    <interactant intactId="EBI-25517419">
        <id>A0A1I9LQF0</id>
        <label>SAUR57</label>
    </interactant>
    <organismsDiffer>false</organismsDiffer>
    <experiments>3</experiments>
</comment>
<comment type="alternative products">
    <event type="alternative splicing"/>
    <isoform>
        <id>Q0V7V2-1</id>
        <name>1</name>
        <sequence type="displayed"/>
    </isoform>
    <isoform>
        <id>Q0V7V2-2</id>
        <name>2</name>
        <sequence type="described" ref="VSP_036770 VSP_036771"/>
    </isoform>
</comment>
<comment type="disruption phenotype">
    <text evidence="4">The pp2c-d1 pp2c-d2 double mutant displays a long hypocotyl phenotype and strongly reduced apical hook maintenance in etiolated seedlings (PubMed:24858935). Plants missing PP2C42/PP2C-D2, PP2C64/PP2C-D5, PP2C79/PP2C-D7, PP2C63/PP2C-D8 and PP2C68/PP2C-D9 exhibit an increased hypocotyl length, as well as an enhanced sensitivity to LiCl and media acidification (PubMed:24858935).</text>
</comment>
<comment type="similarity">
    <text evidence="7">Belongs to the PP2C family.</text>
</comment>
<comment type="sequence caution" evidence="7">
    <conflict type="erroneous initiation">
        <sequence resource="EMBL-CDS" id="BAA94987"/>
    </conflict>
    <text>Truncated N-terminus.</text>
</comment>
<feature type="chain" id="PRO_0000367966" description="Probable protein phosphatase 2C 42">
    <location>
        <begin position="1"/>
        <end position="384"/>
    </location>
</feature>
<feature type="domain" description="PPM-type phosphatase" evidence="3">
    <location>
        <begin position="58"/>
        <end position="358"/>
    </location>
</feature>
<feature type="binding site" evidence="1">
    <location>
        <position position="89"/>
    </location>
    <ligand>
        <name>Mn(2+)</name>
        <dbReference type="ChEBI" id="CHEBI:29035"/>
        <label>1</label>
    </ligand>
</feature>
<feature type="binding site" evidence="1">
    <location>
        <position position="89"/>
    </location>
    <ligand>
        <name>Mn(2+)</name>
        <dbReference type="ChEBI" id="CHEBI:29035"/>
        <label>2</label>
    </ligand>
</feature>
<feature type="binding site" evidence="1">
    <location>
        <position position="90"/>
    </location>
    <ligand>
        <name>Mn(2+)</name>
        <dbReference type="ChEBI" id="CHEBI:29035"/>
        <label>1</label>
    </ligand>
</feature>
<feature type="binding site" evidence="1">
    <location>
        <position position="290"/>
    </location>
    <ligand>
        <name>Mn(2+)</name>
        <dbReference type="ChEBI" id="CHEBI:29035"/>
        <label>2</label>
    </ligand>
</feature>
<feature type="binding site" evidence="1">
    <location>
        <position position="349"/>
    </location>
    <ligand>
        <name>Mn(2+)</name>
        <dbReference type="ChEBI" id="CHEBI:29035"/>
        <label>2</label>
    </ligand>
</feature>
<feature type="splice variant" id="VSP_036770" description="In isoform 2." evidence="7">
    <original>GSAKR</original>
    <variation>VTQRD</variation>
    <location>
        <begin position="312"/>
        <end position="316"/>
    </location>
</feature>
<feature type="splice variant" id="VSP_036771" description="In isoform 2." evidence="7">
    <location>
        <begin position="317"/>
        <end position="384"/>
    </location>
</feature>
<feature type="sequence conflict" description="In Ref. 4; AAM61747." evidence="7" ref="4">
    <original>G</original>
    <variation>R</variation>
    <location>
        <position position="39"/>
    </location>
</feature>
<accession>Q0V7V2</accession>
<accession>Q2V3V2</accession>
<accession>Q8LEW2</accession>
<accession>Q9LSN8</accession>
<organism>
    <name type="scientific">Arabidopsis thaliana</name>
    <name type="common">Mouse-ear cress</name>
    <dbReference type="NCBI Taxonomy" id="3702"/>
    <lineage>
        <taxon>Eukaryota</taxon>
        <taxon>Viridiplantae</taxon>
        <taxon>Streptophyta</taxon>
        <taxon>Embryophyta</taxon>
        <taxon>Tracheophyta</taxon>
        <taxon>Spermatophyta</taxon>
        <taxon>Magnoliopsida</taxon>
        <taxon>eudicotyledons</taxon>
        <taxon>Gunneridae</taxon>
        <taxon>Pentapetalae</taxon>
        <taxon>rosids</taxon>
        <taxon>malvids</taxon>
        <taxon>Brassicales</taxon>
        <taxon>Brassicaceae</taxon>
        <taxon>Camelineae</taxon>
        <taxon>Arabidopsis</taxon>
    </lineage>
</organism>
<proteinExistence type="evidence at protein level"/>
<sequence length="384" mass="42489">MSGSLMNLFSLCFKPFGHVCDNSEAGSGGGGGVSGGTGGEGKDGLLWFRDLGKYCGGDFSMAVIQANQVLEDQSQVESGNFGTFVGVYDGHGGPEAARYVCDHLFNHFREISAETQGVVTRETIERAFHATEEGFASIVSELWQEIPNLATVGTCCLVGVIYQNTLFVASLGDSRVVLGKKGNCGGLSAIQLSTEHNANNEDIRWELKDLHPDDPQIVVFRHGVWRVKGIIQVSRSIGDMYMKRPEFNKEPISQKFRIAEPMKRPLMSATPTILSHPLHPNDSFLIFASDGLWEHLTNEKAVEIVHNHPRAGSAKRLIKAALHEAARKREMRYSDLRKIDKKVRRHFHDDITVIVVFLNHDLISRGHINSTQDTTVSIRSALEH</sequence>
<evidence type="ECO:0000250" key="1">
    <source>
        <dbReference type="UniProtKB" id="P35813"/>
    </source>
</evidence>
<evidence type="ECO:0000250" key="2">
    <source>
        <dbReference type="UniProtKB" id="Q9LHJ9"/>
    </source>
</evidence>
<evidence type="ECO:0000255" key="3">
    <source>
        <dbReference type="PROSITE-ProRule" id="PRU01082"/>
    </source>
</evidence>
<evidence type="ECO:0000269" key="4">
    <source>
    </source>
</evidence>
<evidence type="ECO:0000303" key="5">
    <source>
    </source>
</evidence>
<evidence type="ECO:0000303" key="6">
    <source>
    </source>
</evidence>
<evidence type="ECO:0000305" key="7"/>
<evidence type="ECO:0000312" key="8">
    <source>
        <dbReference type="Araport" id="AT3G17090"/>
    </source>
</evidence>
<evidence type="ECO:0000312" key="9">
    <source>
        <dbReference type="EMBL" id="BAA94987.1"/>
    </source>
</evidence>
<protein>
    <recommendedName>
        <fullName evidence="5">Probable protein phosphatase 2C 42</fullName>
        <shortName evidence="5">AtPP2C42</shortName>
        <ecNumber evidence="2">3.1.3.16</ecNumber>
    </recommendedName>
</protein>
<keyword id="KW-0025">Alternative splicing</keyword>
<keyword id="KW-0378">Hydrolase</keyword>
<keyword id="KW-0460">Magnesium</keyword>
<keyword id="KW-0464">Manganese</keyword>
<keyword id="KW-0479">Metal-binding</keyword>
<keyword id="KW-0904">Protein phosphatase</keyword>
<keyword id="KW-1185">Reference proteome</keyword>
<gene>
    <name evidence="5" type="primary">PP2C42</name>
    <name evidence="6" type="synonym">PP2C-D2</name>
    <name evidence="8" type="ordered locus">At3g17090</name>
    <name evidence="9" type="ORF">K14A17.16</name>
    <name evidence="9" type="ORF">K14A17.4</name>
</gene>
<reference key="1">
    <citation type="journal article" date="2000" name="DNA Res.">
        <title>Structural analysis of Arabidopsis thaliana chromosome 3. I. Sequence features of the regions of 4,504,864 bp covered by sixty P1 and TAC clones.</title>
        <authorList>
            <person name="Sato S."/>
            <person name="Nakamura Y."/>
            <person name="Kaneko T."/>
            <person name="Katoh T."/>
            <person name="Asamizu E."/>
            <person name="Tabata S."/>
        </authorList>
    </citation>
    <scope>NUCLEOTIDE SEQUENCE [LARGE SCALE GENOMIC DNA]</scope>
    <source>
        <strain>cv. Columbia</strain>
    </source>
</reference>
<reference key="2">
    <citation type="journal article" date="2017" name="Plant J.">
        <title>Araport11: a complete reannotation of the Arabidopsis thaliana reference genome.</title>
        <authorList>
            <person name="Cheng C.Y."/>
            <person name="Krishnakumar V."/>
            <person name="Chan A.P."/>
            <person name="Thibaud-Nissen F."/>
            <person name="Schobel S."/>
            <person name="Town C.D."/>
        </authorList>
    </citation>
    <scope>GENOME REANNOTATION</scope>
    <source>
        <strain>cv. Columbia</strain>
    </source>
</reference>
<reference key="3">
    <citation type="submission" date="2006-08" db="EMBL/GenBank/DDBJ databases">
        <title>Arabidopsis ORF Clones.</title>
        <authorList>
            <person name="Quinitio C."/>
            <person name="Chen H."/>
            <person name="Kim C.J."/>
            <person name="Shinn P."/>
            <person name="Ecker J.R."/>
        </authorList>
    </citation>
    <scope>NUCLEOTIDE SEQUENCE [LARGE SCALE MRNA] (ISOFORM 1)</scope>
    <source>
        <strain>cv. Columbia</strain>
    </source>
</reference>
<reference key="4">
    <citation type="submission" date="2002-03" db="EMBL/GenBank/DDBJ databases">
        <title>Full-length cDNA from Arabidopsis thaliana.</title>
        <authorList>
            <person name="Brover V.V."/>
            <person name="Troukhan M.E."/>
            <person name="Alexandrov N.A."/>
            <person name="Lu Y.-P."/>
            <person name="Flavell R.B."/>
            <person name="Feldmann K.A."/>
        </authorList>
    </citation>
    <scope>NUCLEOTIDE SEQUENCE [LARGE SCALE MRNA] (ISOFORM 1)</scope>
</reference>
<reference key="5">
    <citation type="journal article" date="2008" name="BMC Genomics">
        <title>Genome-wide and expression analysis of protein phosphatase 2C in rice and Arabidopsis.</title>
        <authorList>
            <person name="Xue T."/>
            <person name="Wang D."/>
            <person name="Zhang S."/>
            <person name="Ehlting J."/>
            <person name="Ni F."/>
            <person name="Jacab S."/>
            <person name="Zheng C."/>
            <person name="Zhong Y."/>
        </authorList>
    </citation>
    <scope>GENE FAMILY</scope>
    <scope>NOMENCLATURE</scope>
</reference>
<reference key="6">
    <citation type="journal article" date="2014" name="Plant Cell">
        <title>SAUR inhibition of PP2C-D phosphatases activates plasma membrane H+-ATPases to promote cell expansion in Arabidopsis.</title>
        <authorList>
            <person name="Spartz A.K."/>
            <person name="Ren H."/>
            <person name="Park M.Y."/>
            <person name="Grandt K.N."/>
            <person name="Lee S.H."/>
            <person name="Murphy A.S."/>
            <person name="Sussman M.R."/>
            <person name="Overvoorde P.J."/>
            <person name="Gray W.M."/>
        </authorList>
    </citation>
    <scope>FUNCTION</scope>
    <scope>DISRUPTION PHENOTYPE</scope>
    <scope>GENE FAMILY</scope>
    <scope>NOMENCLATURE</scope>
    <source>
        <strain>cv. Columbia</strain>
    </source>
</reference>